<evidence type="ECO:0000250" key="1"/>
<evidence type="ECO:0000255" key="2"/>
<evidence type="ECO:0000255" key="3">
    <source>
        <dbReference type="PROSITE-ProRule" id="PRU00465"/>
    </source>
</evidence>
<evidence type="ECO:0000255" key="4">
    <source>
        <dbReference type="PROSITE-ProRule" id="PRU00711"/>
    </source>
</evidence>
<evidence type="ECO:0000305" key="5"/>
<feature type="transit peptide" description="Mitochondrion" evidence="2">
    <location>
        <begin position="1"/>
        <end status="unknown"/>
    </location>
</feature>
<feature type="chain" id="PRO_0000010354" description="Succinate dehydrogenase [ubiquinone] iron-sulfur subunit, mitochondrial">
    <location>
        <begin status="unknown"/>
        <end position="298"/>
    </location>
</feature>
<feature type="domain" description="2Fe-2S ferredoxin-type" evidence="3">
    <location>
        <begin position="59"/>
        <end position="147"/>
    </location>
</feature>
<feature type="domain" description="4Fe-4S ferredoxin-type" evidence="4">
    <location>
        <begin position="190"/>
        <end position="220"/>
    </location>
</feature>
<feature type="binding site" evidence="1">
    <location>
        <position position="107"/>
    </location>
    <ligand>
        <name>[2Fe-2S] cluster</name>
        <dbReference type="ChEBI" id="CHEBI:190135"/>
    </ligand>
</feature>
<feature type="binding site" evidence="1">
    <location>
        <position position="112"/>
    </location>
    <ligand>
        <name>[2Fe-2S] cluster</name>
        <dbReference type="ChEBI" id="CHEBI:190135"/>
    </ligand>
</feature>
<feature type="binding site" evidence="1">
    <location>
        <position position="115"/>
    </location>
    <ligand>
        <name>[2Fe-2S] cluster</name>
        <dbReference type="ChEBI" id="CHEBI:190135"/>
    </ligand>
</feature>
<feature type="binding site" evidence="1">
    <location>
        <position position="127"/>
    </location>
    <ligand>
        <name>[2Fe-2S] cluster</name>
        <dbReference type="ChEBI" id="CHEBI:190135"/>
    </ligand>
</feature>
<feature type="binding site" evidence="1">
    <location>
        <position position="200"/>
    </location>
    <ligand>
        <name>[4Fe-4S] cluster</name>
        <dbReference type="ChEBI" id="CHEBI:49883"/>
    </ligand>
</feature>
<feature type="binding site" evidence="1">
    <location>
        <position position="203"/>
    </location>
    <ligand>
        <name>[4Fe-4S] cluster</name>
        <dbReference type="ChEBI" id="CHEBI:49883"/>
    </ligand>
</feature>
<feature type="binding site" evidence="1">
    <location>
        <position position="206"/>
    </location>
    <ligand>
        <name>[4Fe-4S] cluster</name>
        <dbReference type="ChEBI" id="CHEBI:49883"/>
    </ligand>
</feature>
<feature type="binding site" evidence="1">
    <location>
        <position position="210"/>
    </location>
    <ligand>
        <name>[3Fe-4S] cluster</name>
        <dbReference type="ChEBI" id="CHEBI:21137"/>
    </ligand>
</feature>
<feature type="binding site" evidence="1">
    <location>
        <position position="215"/>
    </location>
    <ligand>
        <name>a ubiquinone</name>
        <dbReference type="ChEBI" id="CHEBI:16389"/>
        <note>ligand shared with DHSD</note>
    </ligand>
</feature>
<feature type="binding site" evidence="1">
    <location>
        <position position="257"/>
    </location>
    <ligand>
        <name>[3Fe-4S] cluster</name>
        <dbReference type="ChEBI" id="CHEBI:21137"/>
    </ligand>
</feature>
<feature type="binding site" evidence="1">
    <location>
        <position position="263"/>
    </location>
    <ligand>
        <name>[3Fe-4S] cluster</name>
        <dbReference type="ChEBI" id="CHEBI:21137"/>
    </ligand>
</feature>
<feature type="binding site" evidence="1">
    <location>
        <position position="267"/>
    </location>
    <ligand>
        <name>[4Fe-4S] cluster</name>
        <dbReference type="ChEBI" id="CHEBI:49883"/>
    </ligand>
</feature>
<keyword id="KW-0001">2Fe-2S</keyword>
<keyword id="KW-0003">3Fe-4S</keyword>
<keyword id="KW-0004">4Fe-4S</keyword>
<keyword id="KW-0249">Electron transport</keyword>
<keyword id="KW-0408">Iron</keyword>
<keyword id="KW-0411">Iron-sulfur</keyword>
<keyword id="KW-0472">Membrane</keyword>
<keyword id="KW-0479">Metal-binding</keyword>
<keyword id="KW-0496">Mitochondrion</keyword>
<keyword id="KW-0999">Mitochondrion inner membrane</keyword>
<keyword id="KW-0560">Oxidoreductase</keyword>
<keyword id="KW-1185">Reference proteome</keyword>
<keyword id="KW-0809">Transit peptide</keyword>
<keyword id="KW-0813">Transport</keyword>
<keyword id="KW-0816">Tricarboxylic acid cycle</keyword>
<comment type="function">
    <text evidence="1">Iron-sulfur protein (IP) subunit of succinate dehydrogenase (SDH) that is involved in complex II of the mitochondrial electron transport chain and is responsible for transferring electrons from succinate to ubiquinone (coenzyme Q).</text>
</comment>
<comment type="catalytic activity">
    <reaction>
        <text>a quinone + succinate = fumarate + a quinol</text>
        <dbReference type="Rhea" id="RHEA:40523"/>
        <dbReference type="ChEBI" id="CHEBI:24646"/>
        <dbReference type="ChEBI" id="CHEBI:29806"/>
        <dbReference type="ChEBI" id="CHEBI:30031"/>
        <dbReference type="ChEBI" id="CHEBI:132124"/>
        <dbReference type="EC" id="1.3.5.1"/>
    </reaction>
</comment>
<comment type="cofactor">
    <cofactor evidence="1">
        <name>[2Fe-2S] cluster</name>
        <dbReference type="ChEBI" id="CHEBI:190135"/>
    </cofactor>
    <text evidence="1">Binds 1 [2Fe-2S] cluster.</text>
</comment>
<comment type="cofactor">
    <cofactor evidence="1">
        <name>[3Fe-4S] cluster</name>
        <dbReference type="ChEBI" id="CHEBI:21137"/>
    </cofactor>
    <text evidence="1">Binds 1 [3Fe-4S] cluster.</text>
</comment>
<comment type="cofactor">
    <cofactor evidence="1">
        <name>[4Fe-4S] cluster</name>
        <dbReference type="ChEBI" id="CHEBI:49883"/>
    </cofactor>
    <text evidence="1">Binds 1 [4Fe-4S] cluster.</text>
</comment>
<comment type="pathway">
    <text>Carbohydrate metabolism; tricarboxylic acid cycle; fumarate from succinate (eukaryal route): step 1/1.</text>
</comment>
<comment type="subunit">
    <text evidence="1">Component of complex II composed of four subunits: a flavoprotein (FP), an iron-sulfur protein (IP), and a cytochrome b composed of a large and a small subunit.</text>
</comment>
<comment type="subcellular location">
    <subcellularLocation>
        <location evidence="1">Mitochondrion inner membrane</location>
        <topology evidence="1">Peripheral membrane protein</topology>
        <orientation evidence="1">Matrix side</orientation>
    </subcellularLocation>
</comment>
<comment type="similarity">
    <text evidence="5">Belongs to the succinate dehydrogenase/fumarate reductase iron-sulfur protein family.</text>
</comment>
<comment type="sequence caution" evidence="5">
    <conflict type="frameshift">
        <sequence resource="EMBL-CDS" id="BAA23717"/>
    </conflict>
</comment>
<organism>
    <name type="scientific">Caenorhabditis elegans</name>
    <dbReference type="NCBI Taxonomy" id="6239"/>
    <lineage>
        <taxon>Eukaryota</taxon>
        <taxon>Metazoa</taxon>
        <taxon>Ecdysozoa</taxon>
        <taxon>Nematoda</taxon>
        <taxon>Chromadorea</taxon>
        <taxon>Rhabditida</taxon>
        <taxon>Rhabditina</taxon>
        <taxon>Rhabditomorpha</taxon>
        <taxon>Rhabditoidea</taxon>
        <taxon>Rhabditidae</taxon>
        <taxon>Peloderinae</taxon>
        <taxon>Caenorhabditis</taxon>
    </lineage>
</organism>
<proteinExistence type="evidence at transcript level"/>
<reference key="1">
    <citation type="journal article" date="2000" name="Mol. Biochem. Parasitol.">
        <title>Stage-specific isoforms of Ascaris suum complex. II: The fumarate reductase of the parasitic adult and the succinate dehydrogenase of free-living larvae share a common iron-sulfur subunit.</title>
        <authorList>
            <person name="Amino H."/>
            <person name="Wang H."/>
            <person name="Hirawake H."/>
            <person name="Saruta F."/>
            <person name="Mizuchi D."/>
            <person name="Mineki R."/>
            <person name="Shindo N."/>
            <person name="Murayama K."/>
            <person name="Takamiya S."/>
            <person name="Aoki T."/>
            <person name="Kojima S."/>
            <person name="Kita K."/>
        </authorList>
    </citation>
    <scope>NUCLEOTIDE SEQUENCE [MRNA]</scope>
</reference>
<reference key="2">
    <citation type="journal article" date="1998" name="Science">
        <title>Genome sequence of the nematode C. elegans: a platform for investigating biology.</title>
        <authorList>
            <consortium name="The C. elegans sequencing consortium"/>
        </authorList>
    </citation>
    <scope>NUCLEOTIDE SEQUENCE [LARGE SCALE GENOMIC DNA]</scope>
    <source>
        <strain>Bristol N2</strain>
    </source>
</reference>
<accession>Q09545</accession>
<accession>O44075</accession>
<dbReference type="EC" id="1.3.5.1"/>
<dbReference type="EMBL" id="AB008569">
    <property type="protein sequence ID" value="BAA23717.1"/>
    <property type="status" value="ALT_FRAME"/>
    <property type="molecule type" value="mRNA"/>
</dbReference>
<dbReference type="EMBL" id="Z47809">
    <property type="protein sequence ID" value="CAA87780.1"/>
    <property type="molecule type" value="Genomic_DNA"/>
</dbReference>
<dbReference type="PIR" id="T22083">
    <property type="entry name" value="T22083"/>
</dbReference>
<dbReference type="PIR" id="T37260">
    <property type="entry name" value="T37260"/>
</dbReference>
<dbReference type="RefSeq" id="NP_495992.1">
    <property type="nucleotide sequence ID" value="NM_063591.8"/>
</dbReference>
<dbReference type="SMR" id="Q09545"/>
<dbReference type="BioGRID" id="39806">
    <property type="interactions" value="39"/>
</dbReference>
<dbReference type="FunCoup" id="Q09545">
    <property type="interactions" value="2068"/>
</dbReference>
<dbReference type="STRING" id="6239.F42A8.2.2"/>
<dbReference type="PaxDb" id="6239-F42A8.2.1"/>
<dbReference type="PeptideAtlas" id="Q09545"/>
<dbReference type="EnsemblMetazoa" id="F42A8.2.1">
    <property type="protein sequence ID" value="F42A8.2.1"/>
    <property type="gene ID" value="WBGene00006433"/>
</dbReference>
<dbReference type="GeneID" id="174482"/>
<dbReference type="KEGG" id="cel:CELE_F42A8.2"/>
<dbReference type="AGR" id="WB:WBGene00006433"/>
<dbReference type="CTD" id="174482"/>
<dbReference type="WormBase" id="F42A8.2">
    <property type="protein sequence ID" value="CE01579"/>
    <property type="gene ID" value="WBGene00006433"/>
    <property type="gene designation" value="sdhb-1"/>
</dbReference>
<dbReference type="eggNOG" id="KOG3049">
    <property type="taxonomic scope" value="Eukaryota"/>
</dbReference>
<dbReference type="GeneTree" id="ENSGT00390000013558"/>
<dbReference type="HOGENOM" id="CLU_044838_0_2_1"/>
<dbReference type="InParanoid" id="Q09545"/>
<dbReference type="OMA" id="DGQYFGP"/>
<dbReference type="OrthoDB" id="1696654at2759"/>
<dbReference type="PhylomeDB" id="Q09545"/>
<dbReference type="BRENDA" id="1.3.5.1">
    <property type="organism ID" value="1045"/>
</dbReference>
<dbReference type="Reactome" id="R-CEL-71403">
    <property type="pathway name" value="Citric acid cycle (TCA cycle)"/>
</dbReference>
<dbReference type="UniPathway" id="UPA00223">
    <property type="reaction ID" value="UER01006"/>
</dbReference>
<dbReference type="PRO" id="PR:Q09545"/>
<dbReference type="Proteomes" id="UP000001940">
    <property type="component" value="Chromosome II"/>
</dbReference>
<dbReference type="Bgee" id="WBGene00006433">
    <property type="expression patterns" value="Expressed in material anatomical entity and 5 other cell types or tissues"/>
</dbReference>
<dbReference type="GO" id="GO:0005743">
    <property type="term" value="C:mitochondrial inner membrane"/>
    <property type="evidence" value="ECO:0000250"/>
    <property type="project" value="UniProtKB"/>
</dbReference>
<dbReference type="GO" id="GO:0031966">
    <property type="term" value="C:mitochondrial membrane"/>
    <property type="evidence" value="ECO:0000318"/>
    <property type="project" value="GO_Central"/>
</dbReference>
<dbReference type="GO" id="GO:0005739">
    <property type="term" value="C:mitochondrion"/>
    <property type="evidence" value="ECO:0000314"/>
    <property type="project" value="WormBase"/>
</dbReference>
<dbReference type="GO" id="GO:0045273">
    <property type="term" value="C:respiratory chain complex II (succinate dehydrogenase)"/>
    <property type="evidence" value="ECO:0000250"/>
    <property type="project" value="UniProtKB"/>
</dbReference>
<dbReference type="GO" id="GO:0051537">
    <property type="term" value="F:2 iron, 2 sulfur cluster binding"/>
    <property type="evidence" value="ECO:0000250"/>
    <property type="project" value="UniProtKB"/>
</dbReference>
<dbReference type="GO" id="GO:0051538">
    <property type="term" value="F:3 iron, 4 sulfur cluster binding"/>
    <property type="evidence" value="ECO:0000250"/>
    <property type="project" value="UniProtKB"/>
</dbReference>
<dbReference type="GO" id="GO:0051539">
    <property type="term" value="F:4 iron, 4 sulfur cluster binding"/>
    <property type="evidence" value="ECO:0000250"/>
    <property type="project" value="UniProtKB"/>
</dbReference>
<dbReference type="GO" id="GO:0009055">
    <property type="term" value="F:electron transfer activity"/>
    <property type="evidence" value="ECO:0007669"/>
    <property type="project" value="InterPro"/>
</dbReference>
<dbReference type="GO" id="GO:0046872">
    <property type="term" value="F:metal ion binding"/>
    <property type="evidence" value="ECO:0007669"/>
    <property type="project" value="UniProtKB-KW"/>
</dbReference>
<dbReference type="GO" id="GO:0008177">
    <property type="term" value="F:succinate dehydrogenase (quinone) activity"/>
    <property type="evidence" value="ECO:0007669"/>
    <property type="project" value="UniProtKB-EC"/>
</dbReference>
<dbReference type="GO" id="GO:0048039">
    <property type="term" value="F:ubiquinone binding"/>
    <property type="evidence" value="ECO:0000250"/>
    <property type="project" value="UniProtKB"/>
</dbReference>
<dbReference type="GO" id="GO:0009060">
    <property type="term" value="P:aerobic respiration"/>
    <property type="evidence" value="ECO:0000318"/>
    <property type="project" value="GO_Central"/>
</dbReference>
<dbReference type="GO" id="GO:0022904">
    <property type="term" value="P:respiratory electron transport chain"/>
    <property type="evidence" value="ECO:0000318"/>
    <property type="project" value="GO_Central"/>
</dbReference>
<dbReference type="GO" id="GO:0006099">
    <property type="term" value="P:tricarboxylic acid cycle"/>
    <property type="evidence" value="ECO:0007669"/>
    <property type="project" value="UniProtKB-UniPathway"/>
</dbReference>
<dbReference type="CDD" id="cd00207">
    <property type="entry name" value="fer2"/>
    <property type="match status" value="1"/>
</dbReference>
<dbReference type="FunFam" id="1.10.1060.10:FF:000029">
    <property type="entry name" value="Succinate dehydrogenase [ubiquinone] iron-sulfur subunit, mitochondrial"/>
    <property type="match status" value="1"/>
</dbReference>
<dbReference type="FunFam" id="3.10.20.30:FF:000007">
    <property type="entry name" value="Succinate dehydrogenase [ubiquinone] iron-sulfur subunit, mitochondrial"/>
    <property type="match status" value="1"/>
</dbReference>
<dbReference type="Gene3D" id="3.10.20.30">
    <property type="match status" value="1"/>
</dbReference>
<dbReference type="Gene3D" id="1.10.1060.10">
    <property type="entry name" value="Alpha-helical ferredoxin"/>
    <property type="match status" value="1"/>
</dbReference>
<dbReference type="InterPro" id="IPR036010">
    <property type="entry name" value="2Fe-2S_ferredoxin-like_sf"/>
</dbReference>
<dbReference type="InterPro" id="IPR001041">
    <property type="entry name" value="2Fe-2S_ferredoxin-type"/>
</dbReference>
<dbReference type="InterPro" id="IPR006058">
    <property type="entry name" value="2Fe2S_fd_BS"/>
</dbReference>
<dbReference type="InterPro" id="IPR017896">
    <property type="entry name" value="4Fe4S_Fe-S-bd"/>
</dbReference>
<dbReference type="InterPro" id="IPR017900">
    <property type="entry name" value="4Fe4S_Fe_S_CS"/>
</dbReference>
<dbReference type="InterPro" id="IPR012675">
    <property type="entry name" value="Beta-grasp_dom_sf"/>
</dbReference>
<dbReference type="InterPro" id="IPR009051">
    <property type="entry name" value="Helical_ferredxn"/>
</dbReference>
<dbReference type="InterPro" id="IPR050573">
    <property type="entry name" value="SDH/FRD_Iron-Sulfur"/>
</dbReference>
<dbReference type="InterPro" id="IPR004489">
    <property type="entry name" value="Succ_DH/fum_Rdtase_Fe-S"/>
</dbReference>
<dbReference type="InterPro" id="IPR025192">
    <property type="entry name" value="Succ_DH/fum_Rdtase_N"/>
</dbReference>
<dbReference type="NCBIfam" id="TIGR00384">
    <property type="entry name" value="dhsB"/>
    <property type="match status" value="1"/>
</dbReference>
<dbReference type="NCBIfam" id="NF004616">
    <property type="entry name" value="PRK05950.1"/>
    <property type="match status" value="1"/>
</dbReference>
<dbReference type="PANTHER" id="PTHR11921:SF29">
    <property type="entry name" value="SUCCINATE DEHYDROGENASE [UBIQUINONE] IRON-SULFUR SUBUNIT, MITOCHONDRIAL"/>
    <property type="match status" value="1"/>
</dbReference>
<dbReference type="PANTHER" id="PTHR11921">
    <property type="entry name" value="SUCCINATE DEHYDROGENASE IRON-SULFUR PROTEIN"/>
    <property type="match status" value="1"/>
</dbReference>
<dbReference type="Pfam" id="PF13085">
    <property type="entry name" value="Fer2_3"/>
    <property type="match status" value="1"/>
</dbReference>
<dbReference type="Pfam" id="PF13534">
    <property type="entry name" value="Fer4_17"/>
    <property type="match status" value="1"/>
</dbReference>
<dbReference type="SUPFAM" id="SSF54292">
    <property type="entry name" value="2Fe-2S ferredoxin-like"/>
    <property type="match status" value="1"/>
</dbReference>
<dbReference type="SUPFAM" id="SSF46548">
    <property type="entry name" value="alpha-helical ferredoxin"/>
    <property type="match status" value="1"/>
</dbReference>
<dbReference type="PROSITE" id="PS00197">
    <property type="entry name" value="2FE2S_FER_1"/>
    <property type="match status" value="1"/>
</dbReference>
<dbReference type="PROSITE" id="PS51085">
    <property type="entry name" value="2FE2S_FER_2"/>
    <property type="match status" value="1"/>
</dbReference>
<dbReference type="PROSITE" id="PS00198">
    <property type="entry name" value="4FE4S_FER_1"/>
    <property type="match status" value="1"/>
</dbReference>
<dbReference type="PROSITE" id="PS51379">
    <property type="entry name" value="4FE4S_FER_2"/>
    <property type="match status" value="1"/>
</dbReference>
<sequence>MLARSARLLHSAELAANAIRAASGAPATAAAAEASFPSTDDVAAKTKKTGNRIKTFEIYRFNPEAPGAKPTVQKFDVDLDQCGTMILDALIKIKNEVDPTLTFRRSCREGICGSCAMNIGGQNTLACICKIDSDTSKSTKIYPLPHMFVVKDLVPDMNLFYAQYASIQPWIQKKTPLTLGEKQMHQSVAERDRLDGLYECILCACCSTSCPSYWWNADKYLGPAVLMQAYRWVIDSRDDYATERLHRMHDSFSAFKCHTIMNCTKTCPKHLNPAKAIGEIKSLLTGFTSKPAAEPSAF</sequence>
<gene>
    <name type="primary">sdhb-1</name>
    <name type="synonym">tag-55</name>
    <name type="ORF">F42A8.2</name>
</gene>
<protein>
    <recommendedName>
        <fullName>Succinate dehydrogenase [ubiquinone] iron-sulfur subunit, mitochondrial</fullName>
        <ecNumber>1.3.5.1</ecNumber>
    </recommendedName>
    <alternativeName>
        <fullName>Iron-sulfur subunit of complex II</fullName>
        <shortName>Ip</shortName>
    </alternativeName>
</protein>
<name>SDHB_CAEEL</name>